<evidence type="ECO:0000255" key="1">
    <source>
        <dbReference type="HAMAP-Rule" id="MF_01151"/>
    </source>
</evidence>
<evidence type="ECO:0000256" key="2">
    <source>
        <dbReference type="SAM" id="MobiDB-lite"/>
    </source>
</evidence>
<protein>
    <recommendedName>
        <fullName evidence="1">Protein GrpE</fullName>
    </recommendedName>
    <alternativeName>
        <fullName evidence="1">HSP-70 cofactor</fullName>
    </alternativeName>
</protein>
<keyword id="KW-0143">Chaperone</keyword>
<keyword id="KW-0963">Cytoplasm</keyword>
<keyword id="KW-0346">Stress response</keyword>
<feature type="chain" id="PRO_1000137562" description="Protein GrpE">
    <location>
        <begin position="1"/>
        <end position="197"/>
    </location>
</feature>
<feature type="region of interest" description="Disordered" evidence="2">
    <location>
        <begin position="1"/>
        <end position="39"/>
    </location>
</feature>
<organism>
    <name type="scientific">Escherichia coli O7:K1 (strain IAI39 / ExPEC)</name>
    <dbReference type="NCBI Taxonomy" id="585057"/>
    <lineage>
        <taxon>Bacteria</taxon>
        <taxon>Pseudomonadati</taxon>
        <taxon>Pseudomonadota</taxon>
        <taxon>Gammaproteobacteria</taxon>
        <taxon>Enterobacterales</taxon>
        <taxon>Enterobacteriaceae</taxon>
        <taxon>Escherichia</taxon>
    </lineage>
</organism>
<name>GRPE_ECO7I</name>
<comment type="function">
    <text evidence="1">Participates actively in the response to hyperosmotic and heat shock by preventing the aggregation of stress-denatured proteins, in association with DnaK and GrpE. It is the nucleotide exchange factor for DnaK and may function as a thermosensor. Unfolded proteins bind initially to DnaJ; upon interaction with the DnaJ-bound protein, DnaK hydrolyzes its bound ATP, resulting in the formation of a stable complex. GrpE releases ADP from DnaK; ATP binding to DnaK triggers the release of the substrate protein, thus completing the reaction cycle. Several rounds of ATP-dependent interactions between DnaJ, DnaK and GrpE are required for fully efficient folding.</text>
</comment>
<comment type="subunit">
    <text evidence="1">Homodimer.</text>
</comment>
<comment type="subcellular location">
    <subcellularLocation>
        <location evidence="1">Cytoplasm</location>
    </subcellularLocation>
</comment>
<comment type="similarity">
    <text evidence="1">Belongs to the GrpE family.</text>
</comment>
<reference key="1">
    <citation type="journal article" date="2009" name="PLoS Genet.">
        <title>Organised genome dynamics in the Escherichia coli species results in highly diverse adaptive paths.</title>
        <authorList>
            <person name="Touchon M."/>
            <person name="Hoede C."/>
            <person name="Tenaillon O."/>
            <person name="Barbe V."/>
            <person name="Baeriswyl S."/>
            <person name="Bidet P."/>
            <person name="Bingen E."/>
            <person name="Bonacorsi S."/>
            <person name="Bouchier C."/>
            <person name="Bouvet O."/>
            <person name="Calteau A."/>
            <person name="Chiapello H."/>
            <person name="Clermont O."/>
            <person name="Cruveiller S."/>
            <person name="Danchin A."/>
            <person name="Diard M."/>
            <person name="Dossat C."/>
            <person name="Karoui M.E."/>
            <person name="Frapy E."/>
            <person name="Garry L."/>
            <person name="Ghigo J.M."/>
            <person name="Gilles A.M."/>
            <person name="Johnson J."/>
            <person name="Le Bouguenec C."/>
            <person name="Lescat M."/>
            <person name="Mangenot S."/>
            <person name="Martinez-Jehanne V."/>
            <person name="Matic I."/>
            <person name="Nassif X."/>
            <person name="Oztas S."/>
            <person name="Petit M.A."/>
            <person name="Pichon C."/>
            <person name="Rouy Z."/>
            <person name="Ruf C.S."/>
            <person name="Schneider D."/>
            <person name="Tourret J."/>
            <person name="Vacherie B."/>
            <person name="Vallenet D."/>
            <person name="Medigue C."/>
            <person name="Rocha E.P.C."/>
            <person name="Denamur E."/>
        </authorList>
    </citation>
    <scope>NUCLEOTIDE SEQUENCE [LARGE SCALE GENOMIC DNA]</scope>
    <source>
        <strain>IAI39 / ExPEC</strain>
    </source>
</reference>
<sequence>MSSKEQKTPEGQAPEEIIMDQHEEIEAVEPEASAEQVDPRDEKIANLEAQLAEAQTRERDGILRVKAEMENLRRRTELDIEKAHKFALEKFINELLPVIDSLDRALEVADKANPDMSAMVEGIELTLKSMLDVVRKFGVEVIAETNVPLDPNVHQAIAMVESDDVAPGNVLGIMQKGYTLNGRTIRAAMVTVAKAKA</sequence>
<accession>B7NSB2</accession>
<gene>
    <name evidence="1" type="primary">grpE</name>
    <name type="ordered locus">ECIAI39_2817</name>
</gene>
<proteinExistence type="inferred from homology"/>
<dbReference type="EMBL" id="CU928164">
    <property type="protein sequence ID" value="CAR18939.1"/>
    <property type="molecule type" value="Genomic_DNA"/>
</dbReference>
<dbReference type="RefSeq" id="WP_001296310.1">
    <property type="nucleotide sequence ID" value="NC_011750.1"/>
</dbReference>
<dbReference type="RefSeq" id="YP_002408754.1">
    <property type="nucleotide sequence ID" value="NC_011750.1"/>
</dbReference>
<dbReference type="SMR" id="B7NSB2"/>
<dbReference type="STRING" id="585057.ECIAI39_2817"/>
<dbReference type="GeneID" id="93774463"/>
<dbReference type="KEGG" id="ect:ECIAI39_2817"/>
<dbReference type="PATRIC" id="fig|585057.6.peg.2924"/>
<dbReference type="HOGENOM" id="CLU_057217_6_0_6"/>
<dbReference type="Proteomes" id="UP000000749">
    <property type="component" value="Chromosome"/>
</dbReference>
<dbReference type="GO" id="GO:0005829">
    <property type="term" value="C:cytosol"/>
    <property type="evidence" value="ECO:0007669"/>
    <property type="project" value="TreeGrafter"/>
</dbReference>
<dbReference type="GO" id="GO:0000774">
    <property type="term" value="F:adenyl-nucleotide exchange factor activity"/>
    <property type="evidence" value="ECO:0007669"/>
    <property type="project" value="InterPro"/>
</dbReference>
<dbReference type="GO" id="GO:0042803">
    <property type="term" value="F:protein homodimerization activity"/>
    <property type="evidence" value="ECO:0007669"/>
    <property type="project" value="InterPro"/>
</dbReference>
<dbReference type="GO" id="GO:0051087">
    <property type="term" value="F:protein-folding chaperone binding"/>
    <property type="evidence" value="ECO:0007669"/>
    <property type="project" value="InterPro"/>
</dbReference>
<dbReference type="GO" id="GO:0051082">
    <property type="term" value="F:unfolded protein binding"/>
    <property type="evidence" value="ECO:0007669"/>
    <property type="project" value="TreeGrafter"/>
</dbReference>
<dbReference type="GO" id="GO:0006457">
    <property type="term" value="P:protein folding"/>
    <property type="evidence" value="ECO:0007669"/>
    <property type="project" value="InterPro"/>
</dbReference>
<dbReference type="CDD" id="cd00446">
    <property type="entry name" value="GrpE"/>
    <property type="match status" value="1"/>
</dbReference>
<dbReference type="FunFam" id="2.30.22.10:FF:000001">
    <property type="entry name" value="Protein GrpE"/>
    <property type="match status" value="1"/>
</dbReference>
<dbReference type="FunFam" id="3.90.20.20:FF:000001">
    <property type="entry name" value="Protein GrpE"/>
    <property type="match status" value="1"/>
</dbReference>
<dbReference type="Gene3D" id="3.90.20.20">
    <property type="match status" value="1"/>
</dbReference>
<dbReference type="Gene3D" id="2.30.22.10">
    <property type="entry name" value="Head domain of nucleotide exchange factor GrpE"/>
    <property type="match status" value="1"/>
</dbReference>
<dbReference type="HAMAP" id="MF_01151">
    <property type="entry name" value="GrpE"/>
    <property type="match status" value="1"/>
</dbReference>
<dbReference type="InterPro" id="IPR000740">
    <property type="entry name" value="GrpE"/>
</dbReference>
<dbReference type="InterPro" id="IPR013805">
    <property type="entry name" value="GrpE_coiled_coil"/>
</dbReference>
<dbReference type="InterPro" id="IPR009012">
    <property type="entry name" value="GrpE_head"/>
</dbReference>
<dbReference type="NCBIfam" id="NF007655">
    <property type="entry name" value="PRK10325.1"/>
    <property type="match status" value="1"/>
</dbReference>
<dbReference type="NCBIfam" id="NF010738">
    <property type="entry name" value="PRK14140.1"/>
    <property type="match status" value="1"/>
</dbReference>
<dbReference type="NCBIfam" id="NF010748">
    <property type="entry name" value="PRK14150.1"/>
    <property type="match status" value="1"/>
</dbReference>
<dbReference type="PANTHER" id="PTHR21237">
    <property type="entry name" value="GRPE PROTEIN"/>
    <property type="match status" value="1"/>
</dbReference>
<dbReference type="PANTHER" id="PTHR21237:SF23">
    <property type="entry name" value="GRPE PROTEIN HOMOLOG, MITOCHONDRIAL"/>
    <property type="match status" value="1"/>
</dbReference>
<dbReference type="Pfam" id="PF01025">
    <property type="entry name" value="GrpE"/>
    <property type="match status" value="1"/>
</dbReference>
<dbReference type="PRINTS" id="PR00773">
    <property type="entry name" value="GRPEPROTEIN"/>
</dbReference>
<dbReference type="SUPFAM" id="SSF58014">
    <property type="entry name" value="Coiled-coil domain of nucleotide exchange factor GrpE"/>
    <property type="match status" value="1"/>
</dbReference>
<dbReference type="SUPFAM" id="SSF51064">
    <property type="entry name" value="Head domain of nucleotide exchange factor GrpE"/>
    <property type="match status" value="1"/>
</dbReference>
<dbReference type="PROSITE" id="PS01071">
    <property type="entry name" value="GRPE"/>
    <property type="match status" value="1"/>
</dbReference>